<gene>
    <name evidence="1" type="primary">glmM</name>
    <name type="ordered locus">Rsph17025_0649</name>
</gene>
<dbReference type="EC" id="5.4.2.10" evidence="1"/>
<dbReference type="EMBL" id="CP000661">
    <property type="protein sequence ID" value="ABP69555.1"/>
    <property type="molecule type" value="Genomic_DNA"/>
</dbReference>
<dbReference type="SMR" id="A4WQ91"/>
<dbReference type="STRING" id="349102.Rsph17025_0649"/>
<dbReference type="KEGG" id="rsq:Rsph17025_0649"/>
<dbReference type="eggNOG" id="COG1109">
    <property type="taxonomic scope" value="Bacteria"/>
</dbReference>
<dbReference type="HOGENOM" id="CLU_016950_7_0_5"/>
<dbReference type="BioCyc" id="RSPH349102:G1G8M-670-MONOMER"/>
<dbReference type="GO" id="GO:0005829">
    <property type="term" value="C:cytosol"/>
    <property type="evidence" value="ECO:0007669"/>
    <property type="project" value="TreeGrafter"/>
</dbReference>
<dbReference type="GO" id="GO:0000287">
    <property type="term" value="F:magnesium ion binding"/>
    <property type="evidence" value="ECO:0007669"/>
    <property type="project" value="UniProtKB-UniRule"/>
</dbReference>
<dbReference type="GO" id="GO:0008966">
    <property type="term" value="F:phosphoglucosamine mutase activity"/>
    <property type="evidence" value="ECO:0007669"/>
    <property type="project" value="UniProtKB-UniRule"/>
</dbReference>
<dbReference type="GO" id="GO:0004615">
    <property type="term" value="F:phosphomannomutase activity"/>
    <property type="evidence" value="ECO:0007669"/>
    <property type="project" value="TreeGrafter"/>
</dbReference>
<dbReference type="GO" id="GO:0005975">
    <property type="term" value="P:carbohydrate metabolic process"/>
    <property type="evidence" value="ECO:0007669"/>
    <property type="project" value="InterPro"/>
</dbReference>
<dbReference type="GO" id="GO:0009252">
    <property type="term" value="P:peptidoglycan biosynthetic process"/>
    <property type="evidence" value="ECO:0007669"/>
    <property type="project" value="TreeGrafter"/>
</dbReference>
<dbReference type="GO" id="GO:0006048">
    <property type="term" value="P:UDP-N-acetylglucosamine biosynthetic process"/>
    <property type="evidence" value="ECO:0007669"/>
    <property type="project" value="TreeGrafter"/>
</dbReference>
<dbReference type="CDD" id="cd05802">
    <property type="entry name" value="GlmM"/>
    <property type="match status" value="1"/>
</dbReference>
<dbReference type="FunFam" id="3.30.310.50:FF:000001">
    <property type="entry name" value="Phosphoglucosamine mutase"/>
    <property type="match status" value="1"/>
</dbReference>
<dbReference type="FunFam" id="3.40.120.10:FF:000001">
    <property type="entry name" value="Phosphoglucosamine mutase"/>
    <property type="match status" value="1"/>
</dbReference>
<dbReference type="FunFam" id="3.40.120.10:FF:000002">
    <property type="entry name" value="Phosphoglucosamine mutase"/>
    <property type="match status" value="1"/>
</dbReference>
<dbReference type="Gene3D" id="3.40.120.10">
    <property type="entry name" value="Alpha-D-Glucose-1,6-Bisphosphate, subunit A, domain 3"/>
    <property type="match status" value="3"/>
</dbReference>
<dbReference type="Gene3D" id="3.30.310.50">
    <property type="entry name" value="Alpha-D-phosphohexomutase, C-terminal domain"/>
    <property type="match status" value="1"/>
</dbReference>
<dbReference type="HAMAP" id="MF_01554_B">
    <property type="entry name" value="GlmM_B"/>
    <property type="match status" value="1"/>
</dbReference>
<dbReference type="InterPro" id="IPR005844">
    <property type="entry name" value="A-D-PHexomutase_a/b/a-I"/>
</dbReference>
<dbReference type="InterPro" id="IPR016055">
    <property type="entry name" value="A-D-PHexomutase_a/b/a-I/II/III"/>
</dbReference>
<dbReference type="InterPro" id="IPR005845">
    <property type="entry name" value="A-D-PHexomutase_a/b/a-II"/>
</dbReference>
<dbReference type="InterPro" id="IPR005846">
    <property type="entry name" value="A-D-PHexomutase_a/b/a-III"/>
</dbReference>
<dbReference type="InterPro" id="IPR005843">
    <property type="entry name" value="A-D-PHexomutase_C"/>
</dbReference>
<dbReference type="InterPro" id="IPR036900">
    <property type="entry name" value="A-D-PHexomutase_C_sf"/>
</dbReference>
<dbReference type="InterPro" id="IPR016066">
    <property type="entry name" value="A-D-PHexomutase_CS"/>
</dbReference>
<dbReference type="InterPro" id="IPR005841">
    <property type="entry name" value="Alpha-D-phosphohexomutase_SF"/>
</dbReference>
<dbReference type="InterPro" id="IPR006352">
    <property type="entry name" value="GlmM_bact"/>
</dbReference>
<dbReference type="InterPro" id="IPR050060">
    <property type="entry name" value="Phosphoglucosamine_mutase"/>
</dbReference>
<dbReference type="NCBIfam" id="TIGR01455">
    <property type="entry name" value="glmM"/>
    <property type="match status" value="1"/>
</dbReference>
<dbReference type="NCBIfam" id="NF008139">
    <property type="entry name" value="PRK10887.1"/>
    <property type="match status" value="1"/>
</dbReference>
<dbReference type="PANTHER" id="PTHR42946:SF1">
    <property type="entry name" value="PHOSPHOGLUCOMUTASE (ALPHA-D-GLUCOSE-1,6-BISPHOSPHATE-DEPENDENT)"/>
    <property type="match status" value="1"/>
</dbReference>
<dbReference type="PANTHER" id="PTHR42946">
    <property type="entry name" value="PHOSPHOHEXOSE MUTASE"/>
    <property type="match status" value="1"/>
</dbReference>
<dbReference type="Pfam" id="PF02878">
    <property type="entry name" value="PGM_PMM_I"/>
    <property type="match status" value="1"/>
</dbReference>
<dbReference type="Pfam" id="PF02879">
    <property type="entry name" value="PGM_PMM_II"/>
    <property type="match status" value="1"/>
</dbReference>
<dbReference type="Pfam" id="PF02880">
    <property type="entry name" value="PGM_PMM_III"/>
    <property type="match status" value="1"/>
</dbReference>
<dbReference type="Pfam" id="PF00408">
    <property type="entry name" value="PGM_PMM_IV"/>
    <property type="match status" value="1"/>
</dbReference>
<dbReference type="PRINTS" id="PR00509">
    <property type="entry name" value="PGMPMM"/>
</dbReference>
<dbReference type="SUPFAM" id="SSF55957">
    <property type="entry name" value="Phosphoglucomutase, C-terminal domain"/>
    <property type="match status" value="1"/>
</dbReference>
<dbReference type="SUPFAM" id="SSF53738">
    <property type="entry name" value="Phosphoglucomutase, first 3 domains"/>
    <property type="match status" value="3"/>
</dbReference>
<dbReference type="PROSITE" id="PS00710">
    <property type="entry name" value="PGM_PMM"/>
    <property type="match status" value="1"/>
</dbReference>
<name>GLMM_CERS5</name>
<proteinExistence type="inferred from homology"/>
<keyword id="KW-0413">Isomerase</keyword>
<keyword id="KW-0460">Magnesium</keyword>
<keyword id="KW-0479">Metal-binding</keyword>
<keyword id="KW-0597">Phosphoprotein</keyword>
<protein>
    <recommendedName>
        <fullName evidence="1">Phosphoglucosamine mutase</fullName>
        <ecNumber evidence="1">5.4.2.10</ecNumber>
    </recommendedName>
</protein>
<sequence length="447" mass="47718">MTRKLFGTDGVRGRANSYPMTAEVALRLGAAAGRYFRPVGAGSPRVVIGKDTRLSGYMLENALTAGLTSTGMNVLLLGPVPTPAVGFLTRSMRADLGVMISASHNPHEDNGIKFFGPDGFKLSDEAEAEIEAILAGEIQPAQPGNIGRAKRIDDGRGRYQEYCKTTFPAGLRLDGLKVVIDCANGAAYRAAPEVLWELGAEVIPLGVEPDGKNINLRCGSTHPEAAAEAVRAHGADVGICLDGDADRVIILDEQGRQADGDQIMALFAARWAEEGRLRDATLVATVMSNLGLERFLSARGLRLERTPVGDRYVVEAMRRGGWNLGGEQSGHIVMTDFATTGDGLLAGLQFLAAMAQTGRKASELSRSFETVPQLLQNVRYAAGQEPLTAPSVQAVIREAEVRLNGSGRLLIRKSGTEPLIRVMAECEDEALLRDVVEEIVAAVKDAA</sequence>
<feature type="chain" id="PRO_1000068913" description="Phosphoglucosamine mutase">
    <location>
        <begin position="1"/>
        <end position="447"/>
    </location>
</feature>
<feature type="active site" description="Phosphoserine intermediate" evidence="1">
    <location>
        <position position="103"/>
    </location>
</feature>
<feature type="binding site" description="via phosphate group" evidence="1">
    <location>
        <position position="103"/>
    </location>
    <ligand>
        <name>Mg(2+)</name>
        <dbReference type="ChEBI" id="CHEBI:18420"/>
    </ligand>
</feature>
<feature type="binding site" evidence="1">
    <location>
        <position position="242"/>
    </location>
    <ligand>
        <name>Mg(2+)</name>
        <dbReference type="ChEBI" id="CHEBI:18420"/>
    </ligand>
</feature>
<feature type="binding site" evidence="1">
    <location>
        <position position="244"/>
    </location>
    <ligand>
        <name>Mg(2+)</name>
        <dbReference type="ChEBI" id="CHEBI:18420"/>
    </ligand>
</feature>
<feature type="binding site" evidence="1">
    <location>
        <position position="246"/>
    </location>
    <ligand>
        <name>Mg(2+)</name>
        <dbReference type="ChEBI" id="CHEBI:18420"/>
    </ligand>
</feature>
<feature type="modified residue" description="Phosphoserine" evidence="1">
    <location>
        <position position="103"/>
    </location>
</feature>
<comment type="function">
    <text evidence="1">Catalyzes the conversion of glucosamine-6-phosphate to glucosamine-1-phosphate.</text>
</comment>
<comment type="catalytic activity">
    <reaction evidence="1">
        <text>alpha-D-glucosamine 1-phosphate = D-glucosamine 6-phosphate</text>
        <dbReference type="Rhea" id="RHEA:23424"/>
        <dbReference type="ChEBI" id="CHEBI:58516"/>
        <dbReference type="ChEBI" id="CHEBI:58725"/>
        <dbReference type="EC" id="5.4.2.10"/>
    </reaction>
</comment>
<comment type="cofactor">
    <cofactor evidence="1">
        <name>Mg(2+)</name>
        <dbReference type="ChEBI" id="CHEBI:18420"/>
    </cofactor>
    <text evidence="1">Binds 1 Mg(2+) ion per subunit.</text>
</comment>
<comment type="PTM">
    <text evidence="1">Activated by phosphorylation.</text>
</comment>
<comment type="similarity">
    <text evidence="1">Belongs to the phosphohexose mutase family.</text>
</comment>
<organism>
    <name type="scientific">Cereibacter sphaeroides (strain ATCC 17025 / ATH 2.4.3)</name>
    <name type="common">Rhodobacter sphaeroides</name>
    <dbReference type="NCBI Taxonomy" id="349102"/>
    <lineage>
        <taxon>Bacteria</taxon>
        <taxon>Pseudomonadati</taxon>
        <taxon>Pseudomonadota</taxon>
        <taxon>Alphaproteobacteria</taxon>
        <taxon>Rhodobacterales</taxon>
        <taxon>Paracoccaceae</taxon>
        <taxon>Cereibacter</taxon>
    </lineage>
</organism>
<accession>A4WQ91</accession>
<reference key="1">
    <citation type="submission" date="2007-04" db="EMBL/GenBank/DDBJ databases">
        <title>Complete sequence of chromosome of Rhodobacter sphaeroides ATCC 17025.</title>
        <authorList>
            <consortium name="US DOE Joint Genome Institute"/>
            <person name="Copeland A."/>
            <person name="Lucas S."/>
            <person name="Lapidus A."/>
            <person name="Barry K."/>
            <person name="Detter J.C."/>
            <person name="Glavina del Rio T."/>
            <person name="Hammon N."/>
            <person name="Israni S."/>
            <person name="Dalin E."/>
            <person name="Tice H."/>
            <person name="Pitluck S."/>
            <person name="Chertkov O."/>
            <person name="Brettin T."/>
            <person name="Bruce D."/>
            <person name="Han C."/>
            <person name="Schmutz J."/>
            <person name="Larimer F."/>
            <person name="Land M."/>
            <person name="Hauser L."/>
            <person name="Kyrpides N."/>
            <person name="Kim E."/>
            <person name="Richardson P."/>
            <person name="Mackenzie C."/>
            <person name="Choudhary M."/>
            <person name="Donohue T.J."/>
            <person name="Kaplan S."/>
        </authorList>
    </citation>
    <scope>NUCLEOTIDE SEQUENCE [LARGE SCALE GENOMIC DNA]</scope>
    <source>
        <strain>ATCC 17025 / ATH 2.4.3</strain>
    </source>
</reference>
<evidence type="ECO:0000255" key="1">
    <source>
        <dbReference type="HAMAP-Rule" id="MF_01554"/>
    </source>
</evidence>